<proteinExistence type="inferred from homology"/>
<dbReference type="EC" id="2.7.7.8" evidence="1"/>
<dbReference type="EMBL" id="Z98741">
    <property type="protein sequence ID" value="CAB11392.1"/>
    <property type="status" value="ALT_INIT"/>
    <property type="molecule type" value="Genomic_DNA"/>
</dbReference>
<dbReference type="EMBL" id="AL583920">
    <property type="protein sequence ID" value="CAC31235.1"/>
    <property type="molecule type" value="Genomic_DNA"/>
</dbReference>
<dbReference type="PIR" id="H87015">
    <property type="entry name" value="H87015"/>
</dbReference>
<dbReference type="PIR" id="T44900">
    <property type="entry name" value="T44900"/>
</dbReference>
<dbReference type="RefSeq" id="NP_301643.1">
    <property type="nucleotide sequence ID" value="NC_002677.1"/>
</dbReference>
<dbReference type="RefSeq" id="WP_010907967.1">
    <property type="nucleotide sequence ID" value="NC_002677.1"/>
</dbReference>
<dbReference type="SMR" id="Q9CCF8"/>
<dbReference type="STRING" id="272631.gene:17574680"/>
<dbReference type="KEGG" id="mle:ML0854"/>
<dbReference type="PATRIC" id="fig|272631.5.peg.1577"/>
<dbReference type="Leproma" id="ML0854"/>
<dbReference type="eggNOG" id="COG1185">
    <property type="taxonomic scope" value="Bacteria"/>
</dbReference>
<dbReference type="HOGENOM" id="CLU_004217_2_2_11"/>
<dbReference type="OrthoDB" id="9804305at2"/>
<dbReference type="Proteomes" id="UP000000806">
    <property type="component" value="Chromosome"/>
</dbReference>
<dbReference type="GO" id="GO:0005829">
    <property type="term" value="C:cytosol"/>
    <property type="evidence" value="ECO:0007669"/>
    <property type="project" value="TreeGrafter"/>
</dbReference>
<dbReference type="GO" id="GO:0000175">
    <property type="term" value="F:3'-5'-RNA exonuclease activity"/>
    <property type="evidence" value="ECO:0007669"/>
    <property type="project" value="TreeGrafter"/>
</dbReference>
<dbReference type="GO" id="GO:0000287">
    <property type="term" value="F:magnesium ion binding"/>
    <property type="evidence" value="ECO:0007669"/>
    <property type="project" value="UniProtKB-UniRule"/>
</dbReference>
<dbReference type="GO" id="GO:0004654">
    <property type="term" value="F:polyribonucleotide nucleotidyltransferase activity"/>
    <property type="evidence" value="ECO:0007669"/>
    <property type="project" value="UniProtKB-UniRule"/>
</dbReference>
<dbReference type="GO" id="GO:0003723">
    <property type="term" value="F:RNA binding"/>
    <property type="evidence" value="ECO:0007669"/>
    <property type="project" value="UniProtKB-UniRule"/>
</dbReference>
<dbReference type="GO" id="GO:0006402">
    <property type="term" value="P:mRNA catabolic process"/>
    <property type="evidence" value="ECO:0007669"/>
    <property type="project" value="UniProtKB-UniRule"/>
</dbReference>
<dbReference type="GO" id="GO:0006396">
    <property type="term" value="P:RNA processing"/>
    <property type="evidence" value="ECO:0007669"/>
    <property type="project" value="InterPro"/>
</dbReference>
<dbReference type="CDD" id="cd02393">
    <property type="entry name" value="KH-I_PNPase"/>
    <property type="match status" value="1"/>
</dbReference>
<dbReference type="CDD" id="cd11364">
    <property type="entry name" value="RNase_PH_PNPase_2"/>
    <property type="match status" value="1"/>
</dbReference>
<dbReference type="CDD" id="cd04472">
    <property type="entry name" value="S1_PNPase"/>
    <property type="match status" value="1"/>
</dbReference>
<dbReference type="FunFam" id="2.40.50.140:FF:000069">
    <property type="entry name" value="Polyribonucleotide nucleotidyltransferase"/>
    <property type="match status" value="1"/>
</dbReference>
<dbReference type="FunFam" id="3.30.1370.10:FF:000001">
    <property type="entry name" value="Polyribonucleotide nucleotidyltransferase"/>
    <property type="match status" value="1"/>
</dbReference>
<dbReference type="FunFam" id="3.30.230.70:FF:000001">
    <property type="entry name" value="Polyribonucleotide nucleotidyltransferase"/>
    <property type="match status" value="1"/>
</dbReference>
<dbReference type="FunFam" id="3.30.230.70:FF:000002">
    <property type="entry name" value="Polyribonucleotide nucleotidyltransferase"/>
    <property type="match status" value="1"/>
</dbReference>
<dbReference type="Gene3D" id="3.30.230.70">
    <property type="entry name" value="GHMP Kinase, N-terminal domain"/>
    <property type="match status" value="2"/>
</dbReference>
<dbReference type="Gene3D" id="3.30.1370.10">
    <property type="entry name" value="K Homology domain, type 1"/>
    <property type="match status" value="1"/>
</dbReference>
<dbReference type="Gene3D" id="2.40.50.140">
    <property type="entry name" value="Nucleic acid-binding proteins"/>
    <property type="match status" value="1"/>
</dbReference>
<dbReference type="HAMAP" id="MF_01595">
    <property type="entry name" value="PNPase"/>
    <property type="match status" value="1"/>
</dbReference>
<dbReference type="InterPro" id="IPR001247">
    <property type="entry name" value="ExoRNase_PH_dom1"/>
</dbReference>
<dbReference type="InterPro" id="IPR036345">
    <property type="entry name" value="ExoRNase_PH_dom2_sf"/>
</dbReference>
<dbReference type="InterPro" id="IPR014069">
    <property type="entry name" value="GPSI/PNP"/>
</dbReference>
<dbReference type="InterPro" id="IPR004087">
    <property type="entry name" value="KH_dom"/>
</dbReference>
<dbReference type="InterPro" id="IPR004088">
    <property type="entry name" value="KH_dom_type_1"/>
</dbReference>
<dbReference type="InterPro" id="IPR036612">
    <property type="entry name" value="KH_dom_type_1_sf"/>
</dbReference>
<dbReference type="InterPro" id="IPR012340">
    <property type="entry name" value="NA-bd_OB-fold"/>
</dbReference>
<dbReference type="InterPro" id="IPR012162">
    <property type="entry name" value="PNPase"/>
</dbReference>
<dbReference type="InterPro" id="IPR027408">
    <property type="entry name" value="PNPase/RNase_PH_dom_sf"/>
</dbReference>
<dbReference type="InterPro" id="IPR015848">
    <property type="entry name" value="PNPase_PH_RNA-bd_bac/org-type"/>
</dbReference>
<dbReference type="InterPro" id="IPR036456">
    <property type="entry name" value="PNPase_PH_RNA-bd_sf"/>
</dbReference>
<dbReference type="InterPro" id="IPR020568">
    <property type="entry name" value="Ribosomal_Su5_D2-typ_SF"/>
</dbReference>
<dbReference type="InterPro" id="IPR003029">
    <property type="entry name" value="S1_domain"/>
</dbReference>
<dbReference type="NCBIfam" id="TIGR03591">
    <property type="entry name" value="polynuc_phos"/>
    <property type="match status" value="1"/>
</dbReference>
<dbReference type="NCBIfam" id="TIGR02696">
    <property type="entry name" value="pppGpp_PNP"/>
    <property type="match status" value="1"/>
</dbReference>
<dbReference type="NCBIfam" id="NF008805">
    <property type="entry name" value="PRK11824.1"/>
    <property type="match status" value="1"/>
</dbReference>
<dbReference type="PANTHER" id="PTHR11252">
    <property type="entry name" value="POLYRIBONUCLEOTIDE NUCLEOTIDYLTRANSFERASE"/>
    <property type="match status" value="1"/>
</dbReference>
<dbReference type="PANTHER" id="PTHR11252:SF0">
    <property type="entry name" value="POLYRIBONUCLEOTIDE NUCLEOTIDYLTRANSFERASE 1, MITOCHONDRIAL"/>
    <property type="match status" value="1"/>
</dbReference>
<dbReference type="Pfam" id="PF00013">
    <property type="entry name" value="KH_1"/>
    <property type="match status" value="1"/>
</dbReference>
<dbReference type="Pfam" id="PF03726">
    <property type="entry name" value="PNPase"/>
    <property type="match status" value="1"/>
</dbReference>
<dbReference type="Pfam" id="PF01138">
    <property type="entry name" value="RNase_PH"/>
    <property type="match status" value="2"/>
</dbReference>
<dbReference type="Pfam" id="PF00575">
    <property type="entry name" value="S1"/>
    <property type="match status" value="1"/>
</dbReference>
<dbReference type="PIRSF" id="PIRSF005499">
    <property type="entry name" value="PNPase"/>
    <property type="match status" value="1"/>
</dbReference>
<dbReference type="SMART" id="SM00322">
    <property type="entry name" value="KH"/>
    <property type="match status" value="1"/>
</dbReference>
<dbReference type="SMART" id="SM00316">
    <property type="entry name" value="S1"/>
    <property type="match status" value="1"/>
</dbReference>
<dbReference type="SUPFAM" id="SSF54791">
    <property type="entry name" value="Eukaryotic type KH-domain (KH-domain type I)"/>
    <property type="match status" value="1"/>
</dbReference>
<dbReference type="SUPFAM" id="SSF50249">
    <property type="entry name" value="Nucleic acid-binding proteins"/>
    <property type="match status" value="1"/>
</dbReference>
<dbReference type="SUPFAM" id="SSF46915">
    <property type="entry name" value="Polynucleotide phosphorylase/guanosine pentaphosphate synthase (PNPase/GPSI), domain 3"/>
    <property type="match status" value="1"/>
</dbReference>
<dbReference type="SUPFAM" id="SSF55666">
    <property type="entry name" value="Ribonuclease PH domain 2-like"/>
    <property type="match status" value="2"/>
</dbReference>
<dbReference type="SUPFAM" id="SSF54211">
    <property type="entry name" value="Ribosomal protein S5 domain 2-like"/>
    <property type="match status" value="2"/>
</dbReference>
<dbReference type="PROSITE" id="PS50084">
    <property type="entry name" value="KH_TYPE_1"/>
    <property type="match status" value="1"/>
</dbReference>
<dbReference type="PROSITE" id="PS50126">
    <property type="entry name" value="S1"/>
    <property type="match status" value="1"/>
</dbReference>
<gene>
    <name evidence="1" type="primary">pnp</name>
    <name type="ordered locus">ML0854</name>
</gene>
<protein>
    <recommendedName>
        <fullName evidence="1">Polyribonucleotide nucleotidyltransferase</fullName>
        <ecNumber evidence="1">2.7.7.8</ecNumber>
    </recommendedName>
    <alternativeName>
        <fullName evidence="1">Polynucleotide phosphorylase</fullName>
        <shortName evidence="1">PNPase</shortName>
    </alternativeName>
</protein>
<feature type="chain" id="PRO_0000329718" description="Polyribonucleotide nucleotidyltransferase">
    <location>
        <begin position="1"/>
        <end position="773"/>
    </location>
</feature>
<feature type="domain" description="KH" evidence="1">
    <location>
        <begin position="598"/>
        <end position="657"/>
    </location>
</feature>
<feature type="domain" description="S1 motif" evidence="1">
    <location>
        <begin position="669"/>
        <end position="738"/>
    </location>
</feature>
<feature type="region of interest" description="Disordered" evidence="2">
    <location>
        <begin position="749"/>
        <end position="773"/>
    </location>
</feature>
<feature type="binding site" evidence="1">
    <location>
        <position position="532"/>
    </location>
    <ligand>
        <name>Mg(2+)</name>
        <dbReference type="ChEBI" id="CHEBI:18420"/>
    </ligand>
</feature>
<feature type="binding site" evidence="1">
    <location>
        <position position="538"/>
    </location>
    <ligand>
        <name>Mg(2+)</name>
        <dbReference type="ChEBI" id="CHEBI:18420"/>
    </ligand>
</feature>
<reference key="1">
    <citation type="journal article" date="2001" name="Nature">
        <title>Massive gene decay in the leprosy bacillus.</title>
        <authorList>
            <person name="Cole S.T."/>
            <person name="Eiglmeier K."/>
            <person name="Parkhill J."/>
            <person name="James K.D."/>
            <person name="Thomson N.R."/>
            <person name="Wheeler P.R."/>
            <person name="Honore N."/>
            <person name="Garnier T."/>
            <person name="Churcher C.M."/>
            <person name="Harris D.E."/>
            <person name="Mungall K.L."/>
            <person name="Basham D."/>
            <person name="Brown D."/>
            <person name="Chillingworth T."/>
            <person name="Connor R."/>
            <person name="Davies R.M."/>
            <person name="Devlin K."/>
            <person name="Duthoy S."/>
            <person name="Feltwell T."/>
            <person name="Fraser A."/>
            <person name="Hamlin N."/>
            <person name="Holroyd S."/>
            <person name="Hornsby T."/>
            <person name="Jagels K."/>
            <person name="Lacroix C."/>
            <person name="Maclean J."/>
            <person name="Moule S."/>
            <person name="Murphy L.D."/>
            <person name="Oliver K."/>
            <person name="Quail M.A."/>
            <person name="Rajandream M.A."/>
            <person name="Rutherford K.M."/>
            <person name="Rutter S."/>
            <person name="Seeger K."/>
            <person name="Simon S."/>
            <person name="Simmonds M."/>
            <person name="Skelton J."/>
            <person name="Squares R."/>
            <person name="Squares S."/>
            <person name="Stevens K."/>
            <person name="Taylor K."/>
            <person name="Whitehead S."/>
            <person name="Woodward J.R."/>
            <person name="Barrell B.G."/>
        </authorList>
    </citation>
    <scope>NUCLEOTIDE SEQUENCE [LARGE SCALE GENOMIC DNA]</scope>
    <source>
        <strain>TN</strain>
    </source>
</reference>
<accession>Q9CCF8</accession>
<accession>O32966</accession>
<sequence length="773" mass="82047">MSVAEIEEGVFEATVTIDNGSFGTRAIRFETGRLALQAAGAVVAYLDADNMLLSATTASKNPKEQFDFFPLTVDVEERMYAAGRIPGSFFRREGRPSTDAILTCRLIDRPLRPSFVDGLRNEIQVVVTILSVDPNDLYDVLAINAASASTQLGGLPFSGPIGGVRVALIDGTWVAFPTVEQLERAVFDMVIAGRIVGTDDEGKPDVAIMMVEAEATENVIELVECGAQAPTESIVAQGLEVAKPFIAALCTAQQELADVVSSRQAKPPVEYPTFPDYGDDVYYSVASMATDELAAALTIGAKLERDQRTNEIKTQVLERLAGTYEGREKELGAAFRSLTKKLVRQRILTNHFRIDGRGITDIRALSAEVAVVPRAHGSALFERGETQILGVTTLDMVKMAQQIDSLGPETSKRYMHHYNFPPFSTGETGRVGSPKRREIGHGALAERALVPVLPSVEEFPYAIRQVSEALGSNGSTSMGSVCASTLALLNAGVPLKAPVAGIAMGLVSDDVEFDGGTERRFVTLTDILGAEDAFGDMDFKCAGTKDFVTALQLDTKLDGIPSQVLAGALAQAKDARLTILEVMAEAIDRPDEMSPYAPRVITIKVPVDKIGEVIGPKGKVINAITEETGAQISIEDDGTVFVGATDGLSAQAAINKINAIANPQLPTVGERFLGTVVKITEFGAFVSLLPGRDGLVHISKLGKGKRIAKVEDVVNVGDKLRVEIADIEKRGKISLVLVADDDSATVPAAPADAGAAQEFGSGTAPADAATASS</sequence>
<comment type="function">
    <text evidence="1">Involved in mRNA degradation. Catalyzes the phosphorolysis of single-stranded polyribonucleotides processively in the 3'- to 5'-direction.</text>
</comment>
<comment type="catalytic activity">
    <reaction evidence="1">
        <text>RNA(n+1) + phosphate = RNA(n) + a ribonucleoside 5'-diphosphate</text>
        <dbReference type="Rhea" id="RHEA:22096"/>
        <dbReference type="Rhea" id="RHEA-COMP:14527"/>
        <dbReference type="Rhea" id="RHEA-COMP:17342"/>
        <dbReference type="ChEBI" id="CHEBI:43474"/>
        <dbReference type="ChEBI" id="CHEBI:57930"/>
        <dbReference type="ChEBI" id="CHEBI:140395"/>
        <dbReference type="EC" id="2.7.7.8"/>
    </reaction>
</comment>
<comment type="cofactor">
    <cofactor evidence="1">
        <name>Mg(2+)</name>
        <dbReference type="ChEBI" id="CHEBI:18420"/>
    </cofactor>
</comment>
<comment type="subcellular location">
    <subcellularLocation>
        <location evidence="1">Cytoplasm</location>
    </subcellularLocation>
</comment>
<comment type="similarity">
    <text evidence="1">Belongs to the polyribonucleotide nucleotidyltransferase family.</text>
</comment>
<comment type="sequence caution" evidence="3">
    <conflict type="erroneous initiation">
        <sequence resource="EMBL-CDS" id="CAB11392"/>
    </conflict>
</comment>
<evidence type="ECO:0000255" key="1">
    <source>
        <dbReference type="HAMAP-Rule" id="MF_01595"/>
    </source>
</evidence>
<evidence type="ECO:0000256" key="2">
    <source>
        <dbReference type="SAM" id="MobiDB-lite"/>
    </source>
</evidence>
<evidence type="ECO:0000305" key="3"/>
<organism>
    <name type="scientific">Mycobacterium leprae (strain TN)</name>
    <dbReference type="NCBI Taxonomy" id="272631"/>
    <lineage>
        <taxon>Bacteria</taxon>
        <taxon>Bacillati</taxon>
        <taxon>Actinomycetota</taxon>
        <taxon>Actinomycetes</taxon>
        <taxon>Mycobacteriales</taxon>
        <taxon>Mycobacteriaceae</taxon>
        <taxon>Mycobacterium</taxon>
    </lineage>
</organism>
<keyword id="KW-0963">Cytoplasm</keyword>
<keyword id="KW-0460">Magnesium</keyword>
<keyword id="KW-0479">Metal-binding</keyword>
<keyword id="KW-0548">Nucleotidyltransferase</keyword>
<keyword id="KW-1185">Reference proteome</keyword>
<keyword id="KW-0694">RNA-binding</keyword>
<keyword id="KW-0808">Transferase</keyword>
<name>PNP_MYCLE</name>